<dbReference type="EMBL" id="AF155219">
    <property type="protein sequence ID" value="AAD40248.1"/>
    <property type="molecule type" value="Genomic_DNA"/>
</dbReference>
<dbReference type="EMBL" id="AF262032">
    <property type="protein sequence ID" value="AAG09800.1"/>
    <property type="molecule type" value="mRNA"/>
</dbReference>
<dbReference type="EMBL" id="AF370007">
    <property type="protein sequence ID" value="AAK54206.1"/>
    <property type="molecule type" value="mRNA"/>
</dbReference>
<dbReference type="EMBL" id="AK055665">
    <property type="protein sequence ID" value="BAG51549.1"/>
    <property type="molecule type" value="mRNA"/>
</dbReference>
<dbReference type="EMBL" id="BC009983">
    <property type="protein sequence ID" value="AAH09983.1"/>
    <property type="molecule type" value="mRNA"/>
</dbReference>
<dbReference type="CCDS" id="CCDS3774.1"/>
<dbReference type="RefSeq" id="NP_006430.1">
    <property type="nucleotide sequence ID" value="NM_006439.5"/>
</dbReference>
<dbReference type="SMR" id="Q9Y586"/>
<dbReference type="BioGRID" id="115835">
    <property type="interactions" value="146"/>
</dbReference>
<dbReference type="FunCoup" id="Q9Y586">
    <property type="interactions" value="568"/>
</dbReference>
<dbReference type="IntAct" id="Q9Y586">
    <property type="interactions" value="143"/>
</dbReference>
<dbReference type="STRING" id="9606.ENSP00000324701"/>
<dbReference type="iPTMnet" id="Q9Y586"/>
<dbReference type="PhosphoSitePlus" id="Q9Y586"/>
<dbReference type="BioMuta" id="MAB21L2"/>
<dbReference type="DMDM" id="74735281"/>
<dbReference type="MassIVE" id="Q9Y586"/>
<dbReference type="PaxDb" id="9606-ENSP00000324701"/>
<dbReference type="PeptideAtlas" id="Q9Y586"/>
<dbReference type="ProteomicsDB" id="86315"/>
<dbReference type="Antibodypedia" id="45517">
    <property type="antibodies" value="43 antibodies from 14 providers"/>
</dbReference>
<dbReference type="DNASU" id="10586"/>
<dbReference type="Ensembl" id="ENST00000317605.6">
    <property type="protein sequence ID" value="ENSP00000324701.4"/>
    <property type="gene ID" value="ENSG00000181541.6"/>
</dbReference>
<dbReference type="GeneID" id="10586"/>
<dbReference type="KEGG" id="hsa:10586"/>
<dbReference type="MANE-Select" id="ENST00000317605.6">
    <property type="protein sequence ID" value="ENSP00000324701.4"/>
    <property type="RefSeq nucleotide sequence ID" value="NM_006439.5"/>
    <property type="RefSeq protein sequence ID" value="NP_006430.1"/>
</dbReference>
<dbReference type="UCSC" id="uc003ilw.4">
    <property type="organism name" value="human"/>
</dbReference>
<dbReference type="AGR" id="HGNC:6758"/>
<dbReference type="CTD" id="10586"/>
<dbReference type="DisGeNET" id="10586"/>
<dbReference type="GeneCards" id="MAB21L2"/>
<dbReference type="HGNC" id="HGNC:6758">
    <property type="gene designation" value="MAB21L2"/>
</dbReference>
<dbReference type="HPA" id="ENSG00000181541">
    <property type="expression patterns" value="Tissue enriched (intestine)"/>
</dbReference>
<dbReference type="MalaCards" id="MAB21L2"/>
<dbReference type="MIM" id="604357">
    <property type="type" value="gene"/>
</dbReference>
<dbReference type="MIM" id="615877">
    <property type="type" value="phenotype"/>
</dbReference>
<dbReference type="neXtProt" id="NX_Q9Y586"/>
<dbReference type="OpenTargets" id="ENSG00000181541"/>
<dbReference type="Orphanet" id="424099">
    <property type="disease" value="Colobomatous microphthalmia-rhizomelic dysplasia syndrome"/>
</dbReference>
<dbReference type="PharmGKB" id="PA30517"/>
<dbReference type="VEuPathDB" id="HostDB:ENSG00000181541"/>
<dbReference type="eggNOG" id="KOG3963">
    <property type="taxonomic scope" value="Eukaryota"/>
</dbReference>
<dbReference type="GeneTree" id="ENSGT01050000244827"/>
<dbReference type="HOGENOM" id="CLU_045315_0_0_1"/>
<dbReference type="InParanoid" id="Q9Y586"/>
<dbReference type="OMA" id="WDESCIA"/>
<dbReference type="OrthoDB" id="5961151at2759"/>
<dbReference type="PAN-GO" id="Q9Y586">
    <property type="GO annotations" value="0 GO annotations based on evolutionary models"/>
</dbReference>
<dbReference type="PhylomeDB" id="Q9Y586"/>
<dbReference type="TreeFam" id="TF315012"/>
<dbReference type="PathwayCommons" id="Q9Y586"/>
<dbReference type="SignaLink" id="Q9Y586"/>
<dbReference type="BioGRID-ORCS" id="10586">
    <property type="hits" value="13 hits in 1157 CRISPR screens"/>
</dbReference>
<dbReference type="GenomeRNAi" id="10586"/>
<dbReference type="Pharos" id="Q9Y586">
    <property type="development level" value="Tbio"/>
</dbReference>
<dbReference type="PRO" id="PR:Q9Y586"/>
<dbReference type="Proteomes" id="UP000005640">
    <property type="component" value="Chromosome 4"/>
</dbReference>
<dbReference type="RNAct" id="Q9Y586">
    <property type="molecule type" value="protein"/>
</dbReference>
<dbReference type="Bgee" id="ENSG00000181541">
    <property type="expression patterns" value="Expressed in muscle layer of sigmoid colon and 99 other cell types or tissues"/>
</dbReference>
<dbReference type="GO" id="GO:0005737">
    <property type="term" value="C:cytoplasm"/>
    <property type="evidence" value="ECO:0000314"/>
    <property type="project" value="UniProtKB"/>
</dbReference>
<dbReference type="GO" id="GO:0005634">
    <property type="term" value="C:nucleus"/>
    <property type="evidence" value="ECO:0000314"/>
    <property type="project" value="UniProtKB"/>
</dbReference>
<dbReference type="GO" id="GO:0043010">
    <property type="term" value="P:camera-type eye development"/>
    <property type="evidence" value="ECO:0007669"/>
    <property type="project" value="Ensembl"/>
</dbReference>
<dbReference type="GO" id="GO:0008283">
    <property type="term" value="P:cell population proliferation"/>
    <property type="evidence" value="ECO:0007669"/>
    <property type="project" value="Ensembl"/>
</dbReference>
<dbReference type="GO" id="GO:0010172">
    <property type="term" value="P:embryonic body morphogenesis"/>
    <property type="evidence" value="ECO:0007669"/>
    <property type="project" value="Ensembl"/>
</dbReference>
<dbReference type="GO" id="GO:0001654">
    <property type="term" value="P:eye development"/>
    <property type="evidence" value="ECO:0000315"/>
    <property type="project" value="UniProtKB"/>
</dbReference>
<dbReference type="GO" id="GO:0007399">
    <property type="term" value="P:nervous system development"/>
    <property type="evidence" value="ECO:0000304"/>
    <property type="project" value="ProtInc"/>
</dbReference>
<dbReference type="GO" id="GO:0008284">
    <property type="term" value="P:positive regulation of cell population proliferation"/>
    <property type="evidence" value="ECO:0007669"/>
    <property type="project" value="Ensembl"/>
</dbReference>
<dbReference type="FunFam" id="1.10.1410.40:FF:000002">
    <property type="entry name" value="protein mab-21-like 1"/>
    <property type="match status" value="1"/>
</dbReference>
<dbReference type="FunFam" id="3.30.460.90:FF:000001">
    <property type="entry name" value="protein mab-21-like 2"/>
    <property type="match status" value="1"/>
</dbReference>
<dbReference type="Gene3D" id="1.10.1410.40">
    <property type="match status" value="1"/>
</dbReference>
<dbReference type="Gene3D" id="3.30.460.90">
    <property type="match status" value="1"/>
</dbReference>
<dbReference type="InterPro" id="IPR046903">
    <property type="entry name" value="Mab-21-like_nuc_Trfase"/>
</dbReference>
<dbReference type="InterPro" id="IPR046906">
    <property type="entry name" value="Mab-21_HhH/H2TH-like"/>
</dbReference>
<dbReference type="InterPro" id="IPR024810">
    <property type="entry name" value="MAB21L/cGLR"/>
</dbReference>
<dbReference type="PANTHER" id="PTHR10656">
    <property type="entry name" value="CELL FATE DETERMINING PROTEIN MAB21-RELATED"/>
    <property type="match status" value="1"/>
</dbReference>
<dbReference type="PANTHER" id="PTHR10656:SF37">
    <property type="entry name" value="PROTEIN MAB-21-LIKE 2"/>
    <property type="match status" value="1"/>
</dbReference>
<dbReference type="Pfam" id="PF03281">
    <property type="entry name" value="Mab-21"/>
    <property type="match status" value="1"/>
</dbReference>
<dbReference type="Pfam" id="PF20266">
    <property type="entry name" value="Mab-21_C"/>
    <property type="match status" value="1"/>
</dbReference>
<dbReference type="SMART" id="SM01265">
    <property type="entry name" value="Mab-21"/>
    <property type="match status" value="1"/>
</dbReference>
<feature type="chain" id="PRO_0000312787" description="Protein mab-21-like 2">
    <location>
        <begin position="1"/>
        <end position="359"/>
    </location>
</feature>
<feature type="sequence variant" id="VAR_071831" description="In MCSKS; complete loss of ssRNA-binding activity with the variant protein; shows a higher stability than wild-type in tetracycline-inducible cells; dbSNP:rs587777513." evidence="1">
    <original>E</original>
    <variation>K</variation>
    <location>
        <position position="49"/>
    </location>
</feature>
<feature type="sequence variant" id="VAR_071832" description="In MCSKS; complete loss of ssRNA-binding activity with the variant protein; shows a higher stability than wild-type in tetracycline-inducible cells; dbSNP:rs587777512." evidence="1">
    <original>R</original>
    <variation>C</variation>
    <location>
        <position position="51"/>
    </location>
</feature>
<feature type="sequence variant" id="VAR_079053" description="In MCSKS; Decreased stability; does not affect subcellular localization; dbSNP:rs587777512." evidence="2">
    <original>R</original>
    <variation>G</variation>
    <location>
        <position position="51"/>
    </location>
</feature>
<feature type="sequence variant" id="VAR_071833" description="In MCSKS; complete loss of ssRNA-binding activity with the variant protein; shows a higher stability than wild-type in tetracycline-inducible cells; dbSNP:rs587777511." evidence="1">
    <original>R</original>
    <variation>H</variation>
    <location>
        <position position="51"/>
    </location>
</feature>
<feature type="sequence variant" id="VAR_071834" description="In MCSKS; complete loss of ssRNA-binding activity with the variant protein; dbSNP:rs587777514." evidence="1">
    <original>R</original>
    <variation>Q</variation>
    <location>
        <position position="247"/>
    </location>
</feature>
<feature type="sequence conflict" description="In Ref. 2; AAG09800." evidence="3" ref="2">
    <original>G</original>
    <variation>V</variation>
    <location>
        <position position="235"/>
    </location>
</feature>
<organism>
    <name type="scientific">Homo sapiens</name>
    <name type="common">Human</name>
    <dbReference type="NCBI Taxonomy" id="9606"/>
    <lineage>
        <taxon>Eukaryota</taxon>
        <taxon>Metazoa</taxon>
        <taxon>Chordata</taxon>
        <taxon>Craniata</taxon>
        <taxon>Vertebrata</taxon>
        <taxon>Euteleostomi</taxon>
        <taxon>Mammalia</taxon>
        <taxon>Eutheria</taxon>
        <taxon>Euarchontoglires</taxon>
        <taxon>Primates</taxon>
        <taxon>Haplorrhini</taxon>
        <taxon>Catarrhini</taxon>
        <taxon>Hominidae</taxon>
        <taxon>Homo</taxon>
    </lineage>
</organism>
<keyword id="KW-0963">Cytoplasm</keyword>
<keyword id="KW-0217">Developmental protein</keyword>
<keyword id="KW-0225">Disease variant</keyword>
<keyword id="KW-1013">Microphthalmia</keyword>
<keyword id="KW-0539">Nucleus</keyword>
<keyword id="KW-1267">Proteomics identification</keyword>
<keyword id="KW-1185">Reference proteome</keyword>
<protein>
    <recommendedName>
        <fullName>Protein mab-21-like 2</fullName>
    </recommendedName>
</protein>
<proteinExistence type="evidence at protein level"/>
<sequence>MIAAQAKLVYQLNKYYTERCQARKAAIAKTIREVCKVVSDVLKEVEVQEPRFISSLSEIDARYEGLEVISPTEFEVVLYLNQMGVFNFVDDGSLPGCAVLKLSDGRKRSMSLWVEFITASGYLSARKIRSRFQTLVAQAVDKCSYRDVVKMIADTSEVKLRIRERYVVQITPAFKCTGIWPRSAAQWPMPHIPWPGPNRVAEVKAEGFNLLSKECYSLTGKQSSAESDAWVLQFGEAENRLLMGGCRNKCLSVLKTLRDRHLELPGQPLNNYHMKTLLLYECEKHPRETDWDESCLGDRLNGILLQLISCLQCRRCPHYFLPNLDLFQGKPHSALESAAKQTWRLAREILTNPKSLDKL</sequence>
<reference key="1">
    <citation type="journal article" date="1999" name="Hum. Mol. Genet.">
        <title>Two murine and human homologs of mab-21, a cell fate determination gene involved in Caenorhabditis elegans neural development.</title>
        <authorList>
            <person name="Mariani M."/>
            <person name="Baldessari D."/>
            <person name="Francisconi S."/>
            <person name="Viggiano L."/>
            <person name="Rocchi M."/>
            <person name="Zappavigna V."/>
            <person name="Malgaretti N."/>
            <person name="Consalez G.G."/>
        </authorList>
    </citation>
    <scope>NUCLEOTIDE SEQUENCE [GENOMIC DNA]</scope>
</reference>
<reference key="2">
    <citation type="submission" date="2000-05" db="EMBL/GenBank/DDBJ databases">
        <title>Analysis of the vertebrate Mab21 genes suggests conserved biological roles.</title>
        <authorList>
            <person name="Chow K.L."/>
            <person name="Wong R.L.Y."/>
            <person name="Chan K.Y."/>
            <person name="Lau G.T.C."/>
            <person name="Wong Y.-M."/>
            <person name="Ho S.H."/>
        </authorList>
    </citation>
    <scope>NUCLEOTIDE SEQUENCE [MRNA]</scope>
</reference>
<reference key="3">
    <citation type="submission" date="2001-04" db="EMBL/GenBank/DDBJ databases">
        <authorList>
            <person name="Zhang B."/>
            <person name="Shi L."/>
            <person name="Yuan G.J."/>
            <person name="Chiang Q.B."/>
        </authorList>
    </citation>
    <scope>NUCLEOTIDE SEQUENCE [MRNA]</scope>
</reference>
<reference key="4">
    <citation type="journal article" date="2004" name="Nat. Genet.">
        <title>Complete sequencing and characterization of 21,243 full-length human cDNAs.</title>
        <authorList>
            <person name="Ota T."/>
            <person name="Suzuki Y."/>
            <person name="Nishikawa T."/>
            <person name="Otsuki T."/>
            <person name="Sugiyama T."/>
            <person name="Irie R."/>
            <person name="Wakamatsu A."/>
            <person name="Hayashi K."/>
            <person name="Sato H."/>
            <person name="Nagai K."/>
            <person name="Kimura K."/>
            <person name="Makita H."/>
            <person name="Sekine M."/>
            <person name="Obayashi M."/>
            <person name="Nishi T."/>
            <person name="Shibahara T."/>
            <person name="Tanaka T."/>
            <person name="Ishii S."/>
            <person name="Yamamoto J."/>
            <person name="Saito K."/>
            <person name="Kawai Y."/>
            <person name="Isono Y."/>
            <person name="Nakamura Y."/>
            <person name="Nagahari K."/>
            <person name="Murakami K."/>
            <person name="Yasuda T."/>
            <person name="Iwayanagi T."/>
            <person name="Wagatsuma M."/>
            <person name="Shiratori A."/>
            <person name="Sudo H."/>
            <person name="Hosoiri T."/>
            <person name="Kaku Y."/>
            <person name="Kodaira H."/>
            <person name="Kondo H."/>
            <person name="Sugawara M."/>
            <person name="Takahashi M."/>
            <person name="Kanda K."/>
            <person name="Yokoi T."/>
            <person name="Furuya T."/>
            <person name="Kikkawa E."/>
            <person name="Omura Y."/>
            <person name="Abe K."/>
            <person name="Kamihara K."/>
            <person name="Katsuta N."/>
            <person name="Sato K."/>
            <person name="Tanikawa M."/>
            <person name="Yamazaki M."/>
            <person name="Ninomiya K."/>
            <person name="Ishibashi T."/>
            <person name="Yamashita H."/>
            <person name="Murakawa K."/>
            <person name="Fujimori K."/>
            <person name="Tanai H."/>
            <person name="Kimata M."/>
            <person name="Watanabe M."/>
            <person name="Hiraoka S."/>
            <person name="Chiba Y."/>
            <person name="Ishida S."/>
            <person name="Ono Y."/>
            <person name="Takiguchi S."/>
            <person name="Watanabe S."/>
            <person name="Yosida M."/>
            <person name="Hotuta T."/>
            <person name="Kusano J."/>
            <person name="Kanehori K."/>
            <person name="Takahashi-Fujii A."/>
            <person name="Hara H."/>
            <person name="Tanase T.-O."/>
            <person name="Nomura Y."/>
            <person name="Togiya S."/>
            <person name="Komai F."/>
            <person name="Hara R."/>
            <person name="Takeuchi K."/>
            <person name="Arita M."/>
            <person name="Imose N."/>
            <person name="Musashino K."/>
            <person name="Yuuki H."/>
            <person name="Oshima A."/>
            <person name="Sasaki N."/>
            <person name="Aotsuka S."/>
            <person name="Yoshikawa Y."/>
            <person name="Matsunawa H."/>
            <person name="Ichihara T."/>
            <person name="Shiohata N."/>
            <person name="Sano S."/>
            <person name="Moriya S."/>
            <person name="Momiyama H."/>
            <person name="Satoh N."/>
            <person name="Takami S."/>
            <person name="Terashima Y."/>
            <person name="Suzuki O."/>
            <person name="Nakagawa S."/>
            <person name="Senoh A."/>
            <person name="Mizoguchi H."/>
            <person name="Goto Y."/>
            <person name="Shimizu F."/>
            <person name="Wakebe H."/>
            <person name="Hishigaki H."/>
            <person name="Watanabe T."/>
            <person name="Sugiyama A."/>
            <person name="Takemoto M."/>
            <person name="Kawakami B."/>
            <person name="Yamazaki M."/>
            <person name="Watanabe K."/>
            <person name="Kumagai A."/>
            <person name="Itakura S."/>
            <person name="Fukuzumi Y."/>
            <person name="Fujimori Y."/>
            <person name="Komiyama M."/>
            <person name="Tashiro H."/>
            <person name="Tanigami A."/>
            <person name="Fujiwara T."/>
            <person name="Ono T."/>
            <person name="Yamada K."/>
            <person name="Fujii Y."/>
            <person name="Ozaki K."/>
            <person name="Hirao M."/>
            <person name="Ohmori Y."/>
            <person name="Kawabata A."/>
            <person name="Hikiji T."/>
            <person name="Kobatake N."/>
            <person name="Inagaki H."/>
            <person name="Ikema Y."/>
            <person name="Okamoto S."/>
            <person name="Okitani R."/>
            <person name="Kawakami T."/>
            <person name="Noguchi S."/>
            <person name="Itoh T."/>
            <person name="Shigeta K."/>
            <person name="Senba T."/>
            <person name="Matsumura K."/>
            <person name="Nakajima Y."/>
            <person name="Mizuno T."/>
            <person name="Morinaga M."/>
            <person name="Sasaki M."/>
            <person name="Togashi T."/>
            <person name="Oyama M."/>
            <person name="Hata H."/>
            <person name="Watanabe M."/>
            <person name="Komatsu T."/>
            <person name="Mizushima-Sugano J."/>
            <person name="Satoh T."/>
            <person name="Shirai Y."/>
            <person name="Takahashi Y."/>
            <person name="Nakagawa K."/>
            <person name="Okumura K."/>
            <person name="Nagase T."/>
            <person name="Nomura N."/>
            <person name="Kikuchi H."/>
            <person name="Masuho Y."/>
            <person name="Yamashita R."/>
            <person name="Nakai K."/>
            <person name="Yada T."/>
            <person name="Nakamura Y."/>
            <person name="Ohara O."/>
            <person name="Isogai T."/>
            <person name="Sugano S."/>
        </authorList>
    </citation>
    <scope>NUCLEOTIDE SEQUENCE [LARGE SCALE MRNA]</scope>
</reference>
<reference key="5">
    <citation type="journal article" date="2004" name="Genome Res.">
        <title>The status, quality, and expansion of the NIH full-length cDNA project: the Mammalian Gene Collection (MGC).</title>
        <authorList>
            <consortium name="The MGC Project Team"/>
        </authorList>
    </citation>
    <scope>NUCLEOTIDE SEQUENCE [LARGE SCALE MRNA]</scope>
    <source>
        <tissue>Brain</tissue>
    </source>
</reference>
<reference key="6">
    <citation type="journal article" date="2014" name="Am. J. Hum. Genet.">
        <title>Monoallelic and biallelic mutations in MAB21L2 cause a spectrum of major eye malformations.</title>
        <authorList>
            <consortium name="UK10K"/>
            <consortium name="Baylor-Hopkins Center for Mendelian Genomics"/>
            <person name="Rainger J."/>
            <person name="Pehlivan D."/>
            <person name="Johansson S."/>
            <person name="Bengani H."/>
            <person name="Sanchez-Pulido L."/>
            <person name="Williamson K.A."/>
            <person name="Ture M."/>
            <person name="Barker H."/>
            <person name="Rosendahl K."/>
            <person name="Spranger J."/>
            <person name="Horn D."/>
            <person name="Meynert A."/>
            <person name="Floyd J.A."/>
            <person name="Prescott T."/>
            <person name="Anderson C.A."/>
            <person name="Rainger J.K."/>
            <person name="Karaca E."/>
            <person name="Gonzaga-Jauregui C."/>
            <person name="Jhangiani S."/>
            <person name="Muzny D.M."/>
            <person name="Seawright A."/>
            <person name="Soares D.C."/>
            <person name="Kharbanda M."/>
            <person name="Murday V."/>
            <person name="Finch A."/>
            <person name="Gibbs R.A."/>
            <person name="van Heyningen V."/>
            <person name="Taylor M.S."/>
            <person name="Yakut T."/>
            <person name="Knappskog P.M."/>
            <person name="Hurles M.E."/>
            <person name="Ponting C.P."/>
            <person name="Lupski J.R."/>
            <person name="Houge G."/>
            <person name="FitzPatrick D.R."/>
        </authorList>
    </citation>
    <scope>FUNCTION IN EYE DEVELOPMENT</scope>
    <scope>INVOLVEMENT IN MCSKS</scope>
    <scope>VARIANTS MCSKS LYS-49; CYS-51; HIS-51 AND GLN-247</scope>
    <scope>CHARACTERIZATION OF VARIANTS MCSKS LYS-49; CYS-51; HIS-51 AND GLN-247</scope>
</reference>
<reference key="7">
    <citation type="journal article" date="2015" name="PLoS Genet.">
        <title>Mutations in MAB21L2 result in ocular Coloboma, microcornea and cataracts.</title>
        <authorList>
            <person name="Deml B."/>
            <person name="Kariminejad A."/>
            <person name="Borujerdi R.H."/>
            <person name="Muheisen S."/>
            <person name="Reis L.M."/>
            <person name="Semina E.V."/>
        </authorList>
    </citation>
    <scope>FUNCTION</scope>
    <scope>SUBCELLULAR LOCATION</scope>
    <scope>VARIANT MCSKS GLY-51</scope>
</reference>
<accession>Q9Y586</accession>
<accession>B3KP37</accession>
<accession>Q9HBA7</accession>
<gene>
    <name type="primary">MAB21L2</name>
</gene>
<comment type="function">
    <text evidence="1 2">Required for several aspects of embryonic development including normal development of the eye.</text>
</comment>
<comment type="interaction">
    <interactant intactId="EBI-6659161">
        <id>Q9Y586</id>
    </interactant>
    <interactant intactId="EBI-11743294">
        <id>Q8IZP0-5</id>
        <label>ABI1</label>
    </interactant>
    <organismsDiffer>false</organismsDiffer>
    <experiments>3</experiments>
</comment>
<comment type="interaction">
    <interactant intactId="EBI-6659161">
        <id>Q9Y586</id>
    </interactant>
    <interactant intactId="EBI-1054374">
        <id>P56377</id>
        <label>AP1S2</label>
    </interactant>
    <organismsDiffer>false</organismsDiffer>
    <experiments>5</experiments>
</comment>
<comment type="interaction">
    <interactant intactId="EBI-6659161">
        <id>Q9Y586</id>
    </interactant>
    <interactant intactId="EBI-948603">
        <id>Q03989</id>
        <label>ARID5A</label>
    </interactant>
    <organismsDiffer>false</organismsDiffer>
    <experiments>3</experiments>
</comment>
<comment type="interaction">
    <interactant intactId="EBI-6659161">
        <id>Q9Y586</id>
    </interactant>
    <interactant intactId="EBI-10171570">
        <id>Q68D86</id>
        <label>CCDC102B</label>
    </interactant>
    <organismsDiffer>false</organismsDiffer>
    <experiments>3</experiments>
</comment>
<comment type="interaction">
    <interactant intactId="EBI-6659161">
        <id>Q9Y586</id>
    </interactant>
    <interactant intactId="EBI-739624">
        <id>Q8NHQ1</id>
        <label>CEP70</label>
    </interactant>
    <organismsDiffer>false</organismsDiffer>
    <experiments>3</experiments>
</comment>
<comment type="interaction">
    <interactant intactId="EBI-6659161">
        <id>Q9Y586</id>
    </interactant>
    <interactant intactId="EBI-618309">
        <id>Q08379</id>
        <label>GOLGA2</label>
    </interactant>
    <organismsDiffer>false</organismsDiffer>
    <experiments>3</experiments>
</comment>
<comment type="interaction">
    <interactant intactId="EBI-6659161">
        <id>Q9Y586</id>
    </interactant>
    <interactant intactId="EBI-5916454">
        <id>A6NEM1</id>
        <label>GOLGA6L9</label>
    </interactant>
    <organismsDiffer>false</organismsDiffer>
    <experiments>3</experiments>
</comment>
<comment type="interaction">
    <interactant intactId="EBI-6659161">
        <id>Q9Y586</id>
    </interactant>
    <interactant intactId="EBI-948001">
        <id>Q15323</id>
        <label>KRT31</label>
    </interactant>
    <organismsDiffer>false</organismsDiffer>
    <experiments>3</experiments>
</comment>
<comment type="interaction">
    <interactant intactId="EBI-6659161">
        <id>Q9Y586</id>
    </interactant>
    <interactant intactId="EBI-1047093">
        <id>O76011</id>
        <label>KRT34</label>
    </interactant>
    <organismsDiffer>false</organismsDiffer>
    <experiments>3</experiments>
</comment>
<comment type="interaction">
    <interactant intactId="EBI-6659161">
        <id>Q9Y586</id>
    </interactant>
    <interactant intactId="EBI-10171697">
        <id>Q6A162</id>
        <label>KRT40</label>
    </interactant>
    <organismsDiffer>false</organismsDiffer>
    <experiments>3</experiments>
</comment>
<comment type="interaction">
    <interactant intactId="EBI-6659161">
        <id>Q9Y586</id>
    </interactant>
    <interactant intactId="EBI-16439278">
        <id>Q6FHY5</id>
        <label>MEOX2</label>
    </interactant>
    <organismsDiffer>false</organismsDiffer>
    <experiments>3</experiments>
</comment>
<comment type="interaction">
    <interactant intactId="EBI-6659161">
        <id>Q9Y586</id>
    </interactant>
    <interactant intactId="EBI-302345">
        <id>Q8ND90</id>
        <label>PNMA1</label>
    </interactant>
    <organismsDiffer>false</organismsDiffer>
    <experiments>3</experiments>
</comment>
<comment type="interaction">
    <interactant intactId="EBI-6659161">
        <id>Q9Y586</id>
    </interactant>
    <interactant intactId="EBI-1105213">
        <id>Q9UBB9</id>
        <label>TFIP11</label>
    </interactant>
    <organismsDiffer>false</organismsDiffer>
    <experiments>3</experiments>
</comment>
<comment type="subcellular location">
    <subcellularLocation>
        <location evidence="2">Nucleus</location>
    </subcellularLocation>
    <subcellularLocation>
        <location evidence="2">Cytoplasm</location>
    </subcellularLocation>
    <text evidence="2">Predominantly localizes to the nucleus, with some cytoplasmic localization (PubMed:25719200).</text>
</comment>
<comment type="disease" evidence="1 2">
    <disease id="DI-04146">
        <name>Microphthalmia/coloboma and skeletal dysplasia syndrome</name>
        <acronym>MCSKS</acronym>
        <description>A disease characterized by bilateral colobomatous microphthalmia or bilateral anophthalmia, associated with skeletal dysplasia in some cases. Additional ocular findings include microcornea, cataracts, corectopia and nystagmus. Intellectual disability is present in some patients.</description>
        <dbReference type="MIM" id="615877"/>
    </disease>
    <text>The disease is caused by variants affecting the gene represented in this entry.</text>
</comment>
<comment type="similarity">
    <text evidence="3">Belongs to the mab-21 family.</text>
</comment>
<evidence type="ECO:0000269" key="1">
    <source>
    </source>
</evidence>
<evidence type="ECO:0000269" key="2">
    <source>
    </source>
</evidence>
<evidence type="ECO:0000305" key="3"/>
<name>MB212_HUMAN</name>